<organism>
    <name type="scientific">Bos taurus</name>
    <name type="common">Bovine</name>
    <dbReference type="NCBI Taxonomy" id="9913"/>
    <lineage>
        <taxon>Eukaryota</taxon>
        <taxon>Metazoa</taxon>
        <taxon>Chordata</taxon>
        <taxon>Craniata</taxon>
        <taxon>Vertebrata</taxon>
        <taxon>Euteleostomi</taxon>
        <taxon>Mammalia</taxon>
        <taxon>Eutheria</taxon>
        <taxon>Laurasiatheria</taxon>
        <taxon>Artiodactyla</taxon>
        <taxon>Ruminantia</taxon>
        <taxon>Pecora</taxon>
        <taxon>Bovidae</taxon>
        <taxon>Bovinae</taxon>
        <taxon>Bos</taxon>
    </lineage>
</organism>
<feature type="chain" id="PRO_0000314794" description="Alpha-N-acetylgalactosaminide alpha-2,6-sialyltransferase 6">
    <location>
        <begin position="1"/>
        <end position="332"/>
    </location>
</feature>
<feature type="topological domain" description="Cytoplasmic" evidence="4">
    <location>
        <begin position="1"/>
        <end position="42"/>
    </location>
</feature>
<feature type="transmembrane region" description="Helical; Signal-anchor for type II membrane protein" evidence="4">
    <location>
        <begin position="43"/>
        <end position="63"/>
    </location>
</feature>
<feature type="topological domain" description="Lumenal" evidence="4">
    <location>
        <begin position="64"/>
        <end position="332"/>
    </location>
</feature>
<feature type="region of interest" description="Disordered" evidence="5">
    <location>
        <begin position="1"/>
        <end position="26"/>
    </location>
</feature>
<feature type="glycosylation site" description="N-linked (GlcNAc...) asparagine" evidence="4">
    <location>
        <position position="97"/>
    </location>
</feature>
<feature type="disulfide bond" evidence="1">
    <location>
        <begin position="107"/>
        <end position="255"/>
    </location>
</feature>
<feature type="sequence conflict" description="In Ref. 1; CAF06586." evidence="6" ref="1">
    <original>S</original>
    <variation>F</variation>
    <location>
        <position position="330"/>
    </location>
</feature>
<comment type="function">
    <text evidence="2 3">Transfers the sialyl group (N-acetyl-alpha-neuraminyl or NeuAc) from CMP-NeuAc onto glycoproteins and glycolipids, forming an alpha-2,6-linkage. Produces branched type disialyl structures by transfer of a sialyl group onto the GalNAc or GlcNAc residue inside backbone core chains having a terminal sialic acid with an alpha-2,3-linkage on Gal. ST6GalNAcVI prefers glycolipids to glycoproteins, predominantly catalyzing the biosynthesis of ganglioside GD1alpha from GM1b. Besides GMb1, MSGG and other glycolipids, it shows activity towards sialyl Lc4Cer generating disialyl Lc4Cer, which can lead to the synthesis of disialyl Lewis a (Le(a)), suggested to be a cancer-associated antigen (By similarity). Also has activity toward GD1a and GT1b, and can generate DSGG (disialylgalactosylgloboside) from MSGG (monosialylgalactosylgloboside) (By similarity).</text>
</comment>
<comment type="catalytic activity">
    <reaction evidence="2">
        <text>a ganglioside GM1b (d18:1(4E)) + CMP-N-acetyl-beta-neuraminate = a ganglioside GD1alpha (d18:1(4E)) + CMP + H(+)</text>
        <dbReference type="Rhea" id="RHEA:41968"/>
        <dbReference type="ChEBI" id="CHEBI:15378"/>
        <dbReference type="ChEBI" id="CHEBI:57812"/>
        <dbReference type="ChEBI" id="CHEBI:60377"/>
        <dbReference type="ChEBI" id="CHEBI:78568"/>
        <dbReference type="ChEBI" id="CHEBI:78569"/>
    </reaction>
    <physiologicalReaction direction="left-to-right" evidence="2">
        <dbReference type="Rhea" id="RHEA:41969"/>
    </physiologicalReaction>
</comment>
<comment type="catalytic activity">
    <reaction evidence="2">
        <text>N-acetyl-alpha-neuraminosyl-(2-&gt;3)-beta-D-galactosyl-(1-&gt;3)-N-acetyl-beta-D-glucosaminyl-(1-&gt;3)-beta-D-galactosyl-(1-&gt;4)-beta-D-glucosyl-(1&lt;-&gt;1')-N-acyl-sphing-4-enine + CMP-N-acetyl-beta-neuraminate = N-acetyl-alpha-neuraminosyl-(2-&gt;3)-beta-D-galactosyl-(1-&gt;3)-[N-acetyl-alpha-neuraminosyl-(2-&gt;6)]-N-acetyl-beta-D-glucosaminyl-(1-&gt;3)-beta-D-galactosyl-(1-&gt;4)-beta-D-glucosyl-(1&lt;-&gt;1')-N-acyl-sphing-4-enine + CMP + H(+)</text>
        <dbReference type="Rhea" id="RHEA:47884"/>
        <dbReference type="ChEBI" id="CHEBI:15378"/>
        <dbReference type="ChEBI" id="CHEBI:57812"/>
        <dbReference type="ChEBI" id="CHEBI:60377"/>
        <dbReference type="ChEBI" id="CHEBI:88073"/>
        <dbReference type="ChEBI" id="CHEBI:88079"/>
    </reaction>
    <physiologicalReaction direction="left-to-right" evidence="2">
        <dbReference type="Rhea" id="RHEA:47885"/>
    </physiologicalReaction>
</comment>
<comment type="catalytic activity">
    <reaction evidence="2">
        <text>a globoside MSGG + CMP-N-acetyl-beta-neuraminate = a globoside DSGG + CMP + H(+)</text>
        <dbReference type="Rhea" id="RHEA:56088"/>
        <dbReference type="ChEBI" id="CHEBI:15378"/>
        <dbReference type="ChEBI" id="CHEBI:57812"/>
        <dbReference type="ChEBI" id="CHEBI:60377"/>
        <dbReference type="ChEBI" id="CHEBI:140623"/>
        <dbReference type="ChEBI" id="CHEBI:140624"/>
    </reaction>
    <physiologicalReaction direction="left-to-right" evidence="2">
        <dbReference type="Rhea" id="RHEA:56089"/>
    </physiologicalReaction>
</comment>
<comment type="catalytic activity">
    <reaction evidence="3">
        <text>a ganglioside GD1a (d18:1(4E)) + CMP-N-acetyl-beta-neuraminate = a ganglioside GT1aalpha (d18:1(4E)) + CMP + H(+)</text>
        <dbReference type="Rhea" id="RHEA:41972"/>
        <dbReference type="ChEBI" id="CHEBI:15378"/>
        <dbReference type="ChEBI" id="CHEBI:57812"/>
        <dbReference type="ChEBI" id="CHEBI:60377"/>
        <dbReference type="ChEBI" id="CHEBI:78445"/>
        <dbReference type="ChEBI" id="CHEBI:78571"/>
    </reaction>
    <physiologicalReaction direction="left-to-right" evidence="3">
        <dbReference type="Rhea" id="RHEA:41973"/>
    </physiologicalReaction>
</comment>
<comment type="catalytic activity">
    <reaction evidence="3">
        <text>a ganglioside GT1b (d18:1(4E)) + CMP-N-acetyl-beta-neuraminate = a ganglioside GQ1balpha (d18:1(4E)) + CMP + H(+)</text>
        <dbReference type="Rhea" id="RHEA:41976"/>
        <dbReference type="ChEBI" id="CHEBI:15378"/>
        <dbReference type="ChEBI" id="CHEBI:57812"/>
        <dbReference type="ChEBI" id="CHEBI:60377"/>
        <dbReference type="ChEBI" id="CHEBI:78452"/>
        <dbReference type="ChEBI" id="CHEBI:78572"/>
    </reaction>
    <physiologicalReaction direction="left-to-right" evidence="3">
        <dbReference type="Rhea" id="RHEA:41977"/>
    </physiologicalReaction>
</comment>
<comment type="catalytic activity">
    <reaction evidence="2">
        <text>3-O-[alpha-Neu5Ac-(2-&gt;3)-beta-D-Gal-(1-&gt;3)-alpha-D-GalNAc]-L-Ser-[protein] + CMP-N-acetyl-beta-neuraminate = a 3-O-{alpha-Neu5Ac-(2-&gt;3)-beta-D-Gal-(1-&gt;3)-[alpha-Neu5Ac-(2-&gt;6)]-alpha-D-GalNAc}-L-seryl-[protein] + CMP + H(+)</text>
        <dbReference type="Rhea" id="RHEA:65280"/>
        <dbReference type="Rhea" id="RHEA-COMP:16760"/>
        <dbReference type="Rhea" id="RHEA-COMP:16761"/>
        <dbReference type="ChEBI" id="CHEBI:15378"/>
        <dbReference type="ChEBI" id="CHEBI:57812"/>
        <dbReference type="ChEBI" id="CHEBI:60377"/>
        <dbReference type="ChEBI" id="CHEBI:156395"/>
        <dbReference type="ChEBI" id="CHEBI:156397"/>
    </reaction>
    <physiologicalReaction direction="left-to-right" evidence="2">
        <dbReference type="Rhea" id="RHEA:65281"/>
    </physiologicalReaction>
</comment>
<comment type="catalytic activity">
    <reaction evidence="2">
        <text>3-O-[alpha-Neu5Ac-(2-&gt;3)-beta-D-Gal-(1-&gt;3)-alpha-D-GalNAc]-L-Thr-[protein] + CMP-N-acetyl-beta-neuraminate = a 3-O-{alpha-Neu5Ac-(2-&gt;3)-beta-D-Gal-(1-&gt;3)-[alpha-Neu5Ac-(2-&gt;6)]-alpha-D-GalNAc}-L-threonyl-[protein] + CMP + H(+)</text>
        <dbReference type="Rhea" id="RHEA:65284"/>
        <dbReference type="Rhea" id="RHEA-COMP:16762"/>
        <dbReference type="Rhea" id="RHEA-COMP:16763"/>
        <dbReference type="ChEBI" id="CHEBI:15378"/>
        <dbReference type="ChEBI" id="CHEBI:57812"/>
        <dbReference type="ChEBI" id="CHEBI:60377"/>
        <dbReference type="ChEBI" id="CHEBI:156396"/>
        <dbReference type="ChEBI" id="CHEBI:156398"/>
    </reaction>
    <physiologicalReaction direction="left-to-right" evidence="2">
        <dbReference type="Rhea" id="RHEA:65285"/>
    </physiologicalReaction>
</comment>
<comment type="subcellular location">
    <subcellularLocation>
        <location evidence="1">Golgi apparatus membrane</location>
        <topology evidence="1">Single-pass type II membrane protein</topology>
    </subcellularLocation>
</comment>
<comment type="similarity">
    <text evidence="6">Belongs to the glycosyltransferase 29 family.</text>
</comment>
<proteinExistence type="evidence at transcript level"/>
<accession>Q08E15</accession>
<accession>Q704S2</accession>
<dbReference type="EC" id="2.4.99.-" evidence="2"/>
<dbReference type="EMBL" id="AJ620949">
    <property type="protein sequence ID" value="CAF06586.1"/>
    <property type="molecule type" value="mRNA"/>
</dbReference>
<dbReference type="EMBL" id="BC123467">
    <property type="protein sequence ID" value="AAI23468.1"/>
    <property type="molecule type" value="mRNA"/>
</dbReference>
<dbReference type="RefSeq" id="NP_001001151.2">
    <property type="nucleotide sequence ID" value="NM_001001151.2"/>
</dbReference>
<dbReference type="RefSeq" id="XP_010808690.1">
    <property type="nucleotide sequence ID" value="XM_010810388.2"/>
</dbReference>
<dbReference type="FunCoup" id="Q08E15">
    <property type="interactions" value="146"/>
</dbReference>
<dbReference type="STRING" id="9913.ENSBTAP00000053714"/>
<dbReference type="CAZy" id="GT29">
    <property type="family name" value="Glycosyltransferase Family 29"/>
</dbReference>
<dbReference type="GlyCosmos" id="Q08E15">
    <property type="glycosylation" value="1 site, No reported glycans"/>
</dbReference>
<dbReference type="GlyGen" id="Q08E15">
    <property type="glycosylation" value="1 site"/>
</dbReference>
<dbReference type="PaxDb" id="9913-ENSBTAP00000053714"/>
<dbReference type="Ensembl" id="ENSBTAT00000083124.2">
    <property type="protein sequence ID" value="ENSBTAP00000057209.2"/>
    <property type="gene ID" value="ENSBTAG00000044129.4"/>
</dbReference>
<dbReference type="GeneID" id="407222"/>
<dbReference type="KEGG" id="bta:407222"/>
<dbReference type="CTD" id="30815"/>
<dbReference type="VGNC" id="VGNC:35342">
    <property type="gene designation" value="ST6GALNAC6"/>
</dbReference>
<dbReference type="eggNOG" id="KOG2692">
    <property type="taxonomic scope" value="Eukaryota"/>
</dbReference>
<dbReference type="GeneTree" id="ENSGT00940000160114"/>
<dbReference type="HOGENOM" id="CLU_061099_3_0_1"/>
<dbReference type="InParanoid" id="Q08E15"/>
<dbReference type="OrthoDB" id="10264956at2759"/>
<dbReference type="TreeFam" id="TF323961"/>
<dbReference type="Proteomes" id="UP000009136">
    <property type="component" value="Chromosome 11"/>
</dbReference>
<dbReference type="GO" id="GO:0000139">
    <property type="term" value="C:Golgi membrane"/>
    <property type="evidence" value="ECO:0007669"/>
    <property type="project" value="UniProtKB-SubCell"/>
</dbReference>
<dbReference type="GO" id="GO:0001665">
    <property type="term" value="F:alpha-N-acetylgalactosaminide alpha-2,6-sialyltransferase activity"/>
    <property type="evidence" value="ECO:0000318"/>
    <property type="project" value="GO_Central"/>
</dbReference>
<dbReference type="GO" id="GO:0001574">
    <property type="term" value="P:ganglioside biosynthetic process"/>
    <property type="evidence" value="ECO:0000318"/>
    <property type="project" value="GO_Central"/>
</dbReference>
<dbReference type="GO" id="GO:0009311">
    <property type="term" value="P:oligosaccharide metabolic process"/>
    <property type="evidence" value="ECO:0000318"/>
    <property type="project" value="GO_Central"/>
</dbReference>
<dbReference type="GO" id="GO:0006486">
    <property type="term" value="P:protein glycosylation"/>
    <property type="evidence" value="ECO:0007669"/>
    <property type="project" value="InterPro"/>
</dbReference>
<dbReference type="CDD" id="cd23978">
    <property type="entry name" value="GT29_ST6GALNAC6"/>
    <property type="match status" value="1"/>
</dbReference>
<dbReference type="FunFam" id="3.90.1480.20:FF:000009">
    <property type="entry name" value="alpha-N-acetylgalactosaminide alpha-2,6-sialyltransferase 6 isoform X2"/>
    <property type="match status" value="1"/>
</dbReference>
<dbReference type="Gene3D" id="3.90.1480.20">
    <property type="entry name" value="Glycosyl transferase family 29"/>
    <property type="match status" value="1"/>
</dbReference>
<dbReference type="InterPro" id="IPR001675">
    <property type="entry name" value="Glyco_trans_29"/>
</dbReference>
<dbReference type="InterPro" id="IPR038578">
    <property type="entry name" value="GT29-like_sf"/>
</dbReference>
<dbReference type="PANTHER" id="PTHR45906">
    <property type="entry name" value="ALPHA-N-ACETYL-NEURAMINYL-2,3-BETA-GALACTOSYL-1, 3-N-ACETYL-GALACTOSAMINIDE ALPHA-2,6-SIALYLTRANSFERASE-LIKE"/>
    <property type="match status" value="1"/>
</dbReference>
<dbReference type="PANTHER" id="PTHR45906:SF6">
    <property type="entry name" value="ALPHA-N-ACETYLGALACTOSAMINIDE ALPHA-2,6-SIALYLTRANSFERASE 6"/>
    <property type="match status" value="1"/>
</dbReference>
<dbReference type="Pfam" id="PF00777">
    <property type="entry name" value="Glyco_transf_29"/>
    <property type="match status" value="1"/>
</dbReference>
<keyword id="KW-1015">Disulfide bond</keyword>
<keyword id="KW-0325">Glycoprotein</keyword>
<keyword id="KW-0328">Glycosyltransferase</keyword>
<keyword id="KW-0333">Golgi apparatus</keyword>
<keyword id="KW-0443">Lipid metabolism</keyword>
<keyword id="KW-0472">Membrane</keyword>
<keyword id="KW-1185">Reference proteome</keyword>
<keyword id="KW-0730">Sialic acid</keyword>
<keyword id="KW-0735">Signal-anchor</keyword>
<keyword id="KW-0808">Transferase</keyword>
<keyword id="KW-0812">Transmembrane</keyword>
<keyword id="KW-1133">Transmembrane helix</keyword>
<reference key="1">
    <citation type="journal article" date="2005" name="Glycobiology">
        <title>The animal sialyltransferases and sialyltransferase-related genes: a phylogenetic approach.</title>
        <authorList>
            <person name="Harduin-Lepers A."/>
            <person name="Mollicone R."/>
            <person name="Delannoy P."/>
            <person name="Oriol R."/>
        </authorList>
    </citation>
    <scope>NUCLEOTIDE SEQUENCE [MRNA]</scope>
</reference>
<reference key="2">
    <citation type="submission" date="2006-09" db="EMBL/GenBank/DDBJ databases">
        <authorList>
            <consortium name="NIH - Mammalian Gene Collection (MGC) project"/>
        </authorList>
    </citation>
    <scope>NUCLEOTIDE SEQUENCE [LARGE SCALE MRNA]</scope>
    <source>
        <strain>Hereford</strain>
        <tissue>Basal ganglia</tissue>
    </source>
</reference>
<sequence>MACPRPLSQCDHTPLPGPPAGHWPLPLSRRRREMKSNKEQRSAVFVILFALITILILYSSSSANEVFHYGSLRGRTRRPVNLRKWSITDGYIPILGNKTLPSRCGQCVIVTSSSHLLGTKLGPEIERAECTIRMNDAPTTGYSADVGNKTTFRVVAHSSVFHVLRRPQEFVNRTPETVFIFWGPPNKMQKPQGSLVRVIQRAGLVFPNMEAYAISLSRMRQFDDLFRSETGKDREKSHSWLSTGWFTMVIAVELCDHVHVYGMVPPDYCSLRPHLQRMPYHYYEPKGPDECVTYIQNENSRKGNHHRFITEKRVFSSWAQLYGITFSHPSWT</sequence>
<gene>
    <name type="primary">ST6GALNAC6</name>
    <name type="synonym">SIAT7F</name>
</gene>
<protein>
    <recommendedName>
        <fullName>Alpha-N-acetylgalactosaminide alpha-2,6-sialyltransferase 6</fullName>
        <ecNumber evidence="2">2.4.99.-</ecNumber>
    </recommendedName>
    <alternativeName>
        <fullName>GalNAc alpha-2,6-sialyltransferase VI</fullName>
    </alternativeName>
    <alternativeName>
        <fullName>ST6GalNAc VI</fullName>
        <shortName>ST6GalNAcVI</shortName>
    </alternativeName>
    <alternativeName>
        <fullName>Sialyltransferase 7F</fullName>
        <shortName>SIAT7-F</shortName>
    </alternativeName>
</protein>
<name>SIA7F_BOVIN</name>
<evidence type="ECO:0000250" key="1"/>
<evidence type="ECO:0000250" key="2">
    <source>
        <dbReference type="UniProtKB" id="Q969X2"/>
    </source>
</evidence>
<evidence type="ECO:0000250" key="3">
    <source>
        <dbReference type="UniProtKB" id="Q9JM95"/>
    </source>
</evidence>
<evidence type="ECO:0000255" key="4"/>
<evidence type="ECO:0000256" key="5">
    <source>
        <dbReference type="SAM" id="MobiDB-lite"/>
    </source>
</evidence>
<evidence type="ECO:0000305" key="6"/>